<evidence type="ECO:0000255" key="1">
    <source>
        <dbReference type="HAMAP-Rule" id="MF_01309"/>
    </source>
</evidence>
<evidence type="ECO:0000256" key="2">
    <source>
        <dbReference type="SAM" id="MobiDB-lite"/>
    </source>
</evidence>
<evidence type="ECO:0000305" key="3"/>
<reference key="1">
    <citation type="journal article" date="2007" name="Nat. Biotechnol.">
        <title>Complete genome sequence of the fish pathogen Flavobacterium psychrophilum.</title>
        <authorList>
            <person name="Duchaud E."/>
            <person name="Boussaha M."/>
            <person name="Loux V."/>
            <person name="Bernardet J.-F."/>
            <person name="Michel C."/>
            <person name="Kerouault B."/>
            <person name="Mondot S."/>
            <person name="Nicolas P."/>
            <person name="Bossy R."/>
            <person name="Caron C."/>
            <person name="Bessieres P."/>
            <person name="Gibrat J.-F."/>
            <person name="Claverol S."/>
            <person name="Dumetz F."/>
            <person name="Le Henaff M."/>
            <person name="Benmansour A."/>
        </authorList>
    </citation>
    <scope>NUCLEOTIDE SEQUENCE [LARGE SCALE GENOMIC DNA]</scope>
    <source>
        <strain>ATCC 49511 / DSM 21280 / CIP 103535 / JIP02/86</strain>
    </source>
</reference>
<protein>
    <recommendedName>
        <fullName evidence="1">Small ribosomal subunit protein uS3</fullName>
    </recommendedName>
    <alternativeName>
        <fullName evidence="3">30S ribosomal protein S3</fullName>
    </alternativeName>
</protein>
<sequence length="253" mass="28057">MGQKTNPIGNRLGIIRGWDSNWYGGNDYGDKIAEDYKIRKYIHARLSKASVSKVIIERTLKLVTVTITTARPGIIIGKGGQEVDKLKEELKKVTDKEVQINIFEIKRPELDAFLVATSICRQIESRISYRRAIKMAIAASMRMNAEGIKVLISGRLNGAEMARSEGFKEGRVPLSTFRADIDYALAEAHTTYGRMGIKVWIMKGEVYGKRDLSPLAGMDKKQAGQGGGKGGDSPRGDRKPFNKGGKPDARKRK</sequence>
<proteinExistence type="inferred from homology"/>
<gene>
    <name evidence="1" type="primary">rpsC</name>
    <name type="ordered locus">FP1333</name>
</gene>
<accession>A6GZ93</accession>
<name>RS3_FLAPJ</name>
<dbReference type="EMBL" id="AM398681">
    <property type="protein sequence ID" value="CAL43416.1"/>
    <property type="molecule type" value="Genomic_DNA"/>
</dbReference>
<dbReference type="RefSeq" id="WP_011963464.1">
    <property type="nucleotide sequence ID" value="NC_009613.3"/>
</dbReference>
<dbReference type="RefSeq" id="YP_001296227.1">
    <property type="nucleotide sequence ID" value="NC_009613.3"/>
</dbReference>
<dbReference type="SMR" id="A6GZ93"/>
<dbReference type="STRING" id="402612.FP1333"/>
<dbReference type="EnsemblBacteria" id="CAL43416">
    <property type="protein sequence ID" value="CAL43416"/>
    <property type="gene ID" value="FP1333"/>
</dbReference>
<dbReference type="GeneID" id="66553236"/>
<dbReference type="KEGG" id="fps:FP1333"/>
<dbReference type="PATRIC" id="fig|402612.5.peg.1350"/>
<dbReference type="eggNOG" id="COG0092">
    <property type="taxonomic scope" value="Bacteria"/>
</dbReference>
<dbReference type="HOGENOM" id="CLU_058591_0_2_10"/>
<dbReference type="OrthoDB" id="9806396at2"/>
<dbReference type="Proteomes" id="UP000006394">
    <property type="component" value="Chromosome"/>
</dbReference>
<dbReference type="GO" id="GO:0022627">
    <property type="term" value="C:cytosolic small ribosomal subunit"/>
    <property type="evidence" value="ECO:0007669"/>
    <property type="project" value="TreeGrafter"/>
</dbReference>
<dbReference type="GO" id="GO:0003729">
    <property type="term" value="F:mRNA binding"/>
    <property type="evidence" value="ECO:0007669"/>
    <property type="project" value="UniProtKB-UniRule"/>
</dbReference>
<dbReference type="GO" id="GO:0019843">
    <property type="term" value="F:rRNA binding"/>
    <property type="evidence" value="ECO:0007669"/>
    <property type="project" value="UniProtKB-UniRule"/>
</dbReference>
<dbReference type="GO" id="GO:0003735">
    <property type="term" value="F:structural constituent of ribosome"/>
    <property type="evidence" value="ECO:0007669"/>
    <property type="project" value="InterPro"/>
</dbReference>
<dbReference type="GO" id="GO:0006412">
    <property type="term" value="P:translation"/>
    <property type="evidence" value="ECO:0007669"/>
    <property type="project" value="UniProtKB-UniRule"/>
</dbReference>
<dbReference type="CDD" id="cd02412">
    <property type="entry name" value="KH-II_30S_S3"/>
    <property type="match status" value="1"/>
</dbReference>
<dbReference type="FunFam" id="3.30.300.20:FF:000001">
    <property type="entry name" value="30S ribosomal protein S3"/>
    <property type="match status" value="1"/>
</dbReference>
<dbReference type="Gene3D" id="3.30.300.20">
    <property type="match status" value="1"/>
</dbReference>
<dbReference type="Gene3D" id="3.30.1140.32">
    <property type="entry name" value="Ribosomal protein S3, C-terminal domain"/>
    <property type="match status" value="1"/>
</dbReference>
<dbReference type="HAMAP" id="MF_01309_B">
    <property type="entry name" value="Ribosomal_uS3_B"/>
    <property type="match status" value="1"/>
</dbReference>
<dbReference type="InterPro" id="IPR004087">
    <property type="entry name" value="KH_dom"/>
</dbReference>
<dbReference type="InterPro" id="IPR015946">
    <property type="entry name" value="KH_dom-like_a/b"/>
</dbReference>
<dbReference type="InterPro" id="IPR004044">
    <property type="entry name" value="KH_dom_type_2"/>
</dbReference>
<dbReference type="InterPro" id="IPR009019">
    <property type="entry name" value="KH_sf_prok-type"/>
</dbReference>
<dbReference type="InterPro" id="IPR036419">
    <property type="entry name" value="Ribosomal_S3_C_sf"/>
</dbReference>
<dbReference type="InterPro" id="IPR005704">
    <property type="entry name" value="Ribosomal_uS3_bac-typ"/>
</dbReference>
<dbReference type="InterPro" id="IPR001351">
    <property type="entry name" value="Ribosomal_uS3_C"/>
</dbReference>
<dbReference type="InterPro" id="IPR018280">
    <property type="entry name" value="Ribosomal_uS3_CS"/>
</dbReference>
<dbReference type="NCBIfam" id="TIGR01009">
    <property type="entry name" value="rpsC_bact"/>
    <property type="match status" value="1"/>
</dbReference>
<dbReference type="PANTHER" id="PTHR11760">
    <property type="entry name" value="30S/40S RIBOSOMAL PROTEIN S3"/>
    <property type="match status" value="1"/>
</dbReference>
<dbReference type="PANTHER" id="PTHR11760:SF19">
    <property type="entry name" value="SMALL RIBOSOMAL SUBUNIT PROTEIN US3C"/>
    <property type="match status" value="1"/>
</dbReference>
<dbReference type="Pfam" id="PF07650">
    <property type="entry name" value="KH_2"/>
    <property type="match status" value="1"/>
</dbReference>
<dbReference type="Pfam" id="PF00189">
    <property type="entry name" value="Ribosomal_S3_C"/>
    <property type="match status" value="1"/>
</dbReference>
<dbReference type="SMART" id="SM00322">
    <property type="entry name" value="KH"/>
    <property type="match status" value="1"/>
</dbReference>
<dbReference type="SUPFAM" id="SSF54814">
    <property type="entry name" value="Prokaryotic type KH domain (KH-domain type II)"/>
    <property type="match status" value="1"/>
</dbReference>
<dbReference type="SUPFAM" id="SSF54821">
    <property type="entry name" value="Ribosomal protein S3 C-terminal domain"/>
    <property type="match status" value="1"/>
</dbReference>
<dbReference type="PROSITE" id="PS50823">
    <property type="entry name" value="KH_TYPE_2"/>
    <property type="match status" value="1"/>
</dbReference>
<dbReference type="PROSITE" id="PS00548">
    <property type="entry name" value="RIBOSOMAL_S3"/>
    <property type="match status" value="1"/>
</dbReference>
<feature type="chain" id="PRO_1000086123" description="Small ribosomal subunit protein uS3">
    <location>
        <begin position="1"/>
        <end position="253"/>
    </location>
</feature>
<feature type="domain" description="KH type-2" evidence="1">
    <location>
        <begin position="38"/>
        <end position="106"/>
    </location>
</feature>
<feature type="region of interest" description="Disordered" evidence="2">
    <location>
        <begin position="216"/>
        <end position="253"/>
    </location>
</feature>
<feature type="compositionally biased region" description="Basic and acidic residues" evidence="2">
    <location>
        <begin position="232"/>
        <end position="253"/>
    </location>
</feature>
<keyword id="KW-1185">Reference proteome</keyword>
<keyword id="KW-0687">Ribonucleoprotein</keyword>
<keyword id="KW-0689">Ribosomal protein</keyword>
<keyword id="KW-0694">RNA-binding</keyword>
<keyword id="KW-0699">rRNA-binding</keyword>
<organism>
    <name type="scientific">Flavobacterium psychrophilum (strain ATCC 49511 / DSM 21280 / CIP 103535 / JIP02/86)</name>
    <dbReference type="NCBI Taxonomy" id="402612"/>
    <lineage>
        <taxon>Bacteria</taxon>
        <taxon>Pseudomonadati</taxon>
        <taxon>Bacteroidota</taxon>
        <taxon>Flavobacteriia</taxon>
        <taxon>Flavobacteriales</taxon>
        <taxon>Flavobacteriaceae</taxon>
        <taxon>Flavobacterium</taxon>
    </lineage>
</organism>
<comment type="function">
    <text evidence="1">Binds the lower part of the 30S subunit head. Binds mRNA in the 70S ribosome, positioning it for translation.</text>
</comment>
<comment type="subunit">
    <text evidence="1">Part of the 30S ribosomal subunit. Forms a tight complex with proteins S10 and S14.</text>
</comment>
<comment type="similarity">
    <text evidence="1">Belongs to the universal ribosomal protein uS3 family.</text>
</comment>